<proteinExistence type="inferred from homology"/>
<reference key="1">
    <citation type="journal article" date="2004" name="Proc. Natl. Acad. Sci. U.S.A.">
        <title>The complete genomic sequence of Nocardia farcinica IFM 10152.</title>
        <authorList>
            <person name="Ishikawa J."/>
            <person name="Yamashita A."/>
            <person name="Mikami Y."/>
            <person name="Hoshino Y."/>
            <person name="Kurita H."/>
            <person name="Hotta K."/>
            <person name="Shiba T."/>
            <person name="Hattori M."/>
        </authorList>
    </citation>
    <scope>NUCLEOTIDE SEQUENCE [LARGE SCALE GENOMIC DNA]</scope>
    <source>
        <strain>IFM 10152</strain>
    </source>
</reference>
<name>HUTG_NOCFA</name>
<evidence type="ECO:0000255" key="1">
    <source>
        <dbReference type="HAMAP-Rule" id="MF_00737"/>
    </source>
</evidence>
<accession>Q5Z0G1</accession>
<sequence>MRPAPRWTGRTDGTTDEHLRWHQVVAPYAPGAEPNSCVFVGFASDEGVRRNKGRVGAAAGPDALRQAMAPMALDRPRRAYDAGTVEVVGEALEEGQRALGGTVAGLLDAGHFPVVFGGGHEIAYGTYLGVAGSSRRAPGTRLGILNLDAHFDLRADPVPSSGTPFRQILAAEGDAVRYAVLGISQPSNTAALFDTAARFGVRHLPDDECDPATALAFVDAFLAEIDLVYLTIDLDVLPAAVAPGVSAPAAFGVPLPTLQAVCDRVSASGKLAVVDVAELNPGLDIDNRTARTAARLIHRIVTRHVPVPAG</sequence>
<feature type="chain" id="PRO_0000173760" description="Formimidoylglutamase">
    <location>
        <begin position="1"/>
        <end position="310"/>
    </location>
</feature>
<feature type="binding site" evidence="1">
    <location>
        <position position="120"/>
    </location>
    <ligand>
        <name>Mn(2+)</name>
        <dbReference type="ChEBI" id="CHEBI:29035"/>
        <label>1</label>
    </ligand>
</feature>
<feature type="binding site" evidence="1">
    <location>
        <position position="148"/>
    </location>
    <ligand>
        <name>Mn(2+)</name>
        <dbReference type="ChEBI" id="CHEBI:29035"/>
        <label>1</label>
    </ligand>
</feature>
<feature type="binding site" evidence="1">
    <location>
        <position position="148"/>
    </location>
    <ligand>
        <name>Mn(2+)</name>
        <dbReference type="ChEBI" id="CHEBI:29035"/>
        <label>2</label>
    </ligand>
</feature>
<feature type="binding site" evidence="1">
    <location>
        <position position="150"/>
    </location>
    <ligand>
        <name>Mn(2+)</name>
        <dbReference type="ChEBI" id="CHEBI:29035"/>
        <label>2</label>
    </ligand>
</feature>
<feature type="binding site" evidence="1">
    <location>
        <position position="152"/>
    </location>
    <ligand>
        <name>Mn(2+)</name>
        <dbReference type="ChEBI" id="CHEBI:29035"/>
        <label>1</label>
    </ligand>
</feature>
<feature type="binding site" evidence="1">
    <location>
        <position position="233"/>
    </location>
    <ligand>
        <name>Mn(2+)</name>
        <dbReference type="ChEBI" id="CHEBI:29035"/>
        <label>1</label>
    </ligand>
</feature>
<feature type="binding site" evidence="1">
    <location>
        <position position="233"/>
    </location>
    <ligand>
        <name>Mn(2+)</name>
        <dbReference type="ChEBI" id="CHEBI:29035"/>
        <label>2</label>
    </ligand>
</feature>
<feature type="binding site" evidence="1">
    <location>
        <position position="235"/>
    </location>
    <ligand>
        <name>Mn(2+)</name>
        <dbReference type="ChEBI" id="CHEBI:29035"/>
        <label>2</label>
    </ligand>
</feature>
<dbReference type="EC" id="3.5.3.8" evidence="1"/>
<dbReference type="EMBL" id="AP006618">
    <property type="protein sequence ID" value="BAD56080.1"/>
    <property type="molecule type" value="Genomic_DNA"/>
</dbReference>
<dbReference type="RefSeq" id="WP_011207765.1">
    <property type="nucleotide sequence ID" value="NC_006361.1"/>
</dbReference>
<dbReference type="SMR" id="Q5Z0G1"/>
<dbReference type="STRING" id="247156.NFA_12350"/>
<dbReference type="GeneID" id="61132055"/>
<dbReference type="KEGG" id="nfa:NFA_12350"/>
<dbReference type="eggNOG" id="COG0010">
    <property type="taxonomic scope" value="Bacteria"/>
</dbReference>
<dbReference type="HOGENOM" id="CLU_039478_2_0_11"/>
<dbReference type="OrthoDB" id="9789727at2"/>
<dbReference type="UniPathway" id="UPA00379">
    <property type="reaction ID" value="UER00552"/>
</dbReference>
<dbReference type="Proteomes" id="UP000006820">
    <property type="component" value="Chromosome"/>
</dbReference>
<dbReference type="GO" id="GO:0008783">
    <property type="term" value="F:agmatinase activity"/>
    <property type="evidence" value="ECO:0007669"/>
    <property type="project" value="TreeGrafter"/>
</dbReference>
<dbReference type="GO" id="GO:0050415">
    <property type="term" value="F:formimidoylglutamase activity"/>
    <property type="evidence" value="ECO:0007669"/>
    <property type="project" value="UniProtKB-UniRule"/>
</dbReference>
<dbReference type="GO" id="GO:0030145">
    <property type="term" value="F:manganese ion binding"/>
    <property type="evidence" value="ECO:0007669"/>
    <property type="project" value="UniProtKB-UniRule"/>
</dbReference>
<dbReference type="GO" id="GO:0019556">
    <property type="term" value="P:L-histidine catabolic process to glutamate and formamide"/>
    <property type="evidence" value="ECO:0007669"/>
    <property type="project" value="UniProtKB-UniPathway"/>
</dbReference>
<dbReference type="GO" id="GO:0019557">
    <property type="term" value="P:L-histidine catabolic process to glutamate and formate"/>
    <property type="evidence" value="ECO:0007669"/>
    <property type="project" value="UniProtKB-UniPathway"/>
</dbReference>
<dbReference type="GO" id="GO:0033389">
    <property type="term" value="P:putrescine biosynthetic process from arginine, via agmatine"/>
    <property type="evidence" value="ECO:0007669"/>
    <property type="project" value="TreeGrafter"/>
</dbReference>
<dbReference type="CDD" id="cd09988">
    <property type="entry name" value="Formimidoylglutamase"/>
    <property type="match status" value="1"/>
</dbReference>
<dbReference type="Gene3D" id="3.40.800.10">
    <property type="entry name" value="Ureohydrolase domain"/>
    <property type="match status" value="1"/>
</dbReference>
<dbReference type="HAMAP" id="MF_00737">
    <property type="entry name" value="Formimidoylglutam"/>
    <property type="match status" value="1"/>
</dbReference>
<dbReference type="InterPro" id="IPR005923">
    <property type="entry name" value="HutG"/>
</dbReference>
<dbReference type="InterPro" id="IPR006035">
    <property type="entry name" value="Ureohydrolase"/>
</dbReference>
<dbReference type="InterPro" id="IPR023696">
    <property type="entry name" value="Ureohydrolase_dom_sf"/>
</dbReference>
<dbReference type="InterPro" id="IPR020855">
    <property type="entry name" value="Ureohydrolase_Mn_BS"/>
</dbReference>
<dbReference type="NCBIfam" id="TIGR01227">
    <property type="entry name" value="hutG"/>
    <property type="match status" value="1"/>
</dbReference>
<dbReference type="PANTHER" id="PTHR11358">
    <property type="entry name" value="ARGINASE/AGMATINASE"/>
    <property type="match status" value="1"/>
</dbReference>
<dbReference type="PANTHER" id="PTHR11358:SF35">
    <property type="entry name" value="FORMIMIDOYLGLUTAMASE"/>
    <property type="match status" value="1"/>
</dbReference>
<dbReference type="Pfam" id="PF00491">
    <property type="entry name" value="Arginase"/>
    <property type="match status" value="1"/>
</dbReference>
<dbReference type="PIRSF" id="PIRSF036979">
    <property type="entry name" value="Arginase"/>
    <property type="match status" value="1"/>
</dbReference>
<dbReference type="PRINTS" id="PR00116">
    <property type="entry name" value="ARGINASE"/>
</dbReference>
<dbReference type="SUPFAM" id="SSF52768">
    <property type="entry name" value="Arginase/deacetylase"/>
    <property type="match status" value="1"/>
</dbReference>
<dbReference type="PROSITE" id="PS01053">
    <property type="entry name" value="ARGINASE_1"/>
    <property type="match status" value="1"/>
</dbReference>
<dbReference type="PROSITE" id="PS51409">
    <property type="entry name" value="ARGINASE_2"/>
    <property type="match status" value="1"/>
</dbReference>
<gene>
    <name evidence="1" type="primary">hutG</name>
    <name type="ordered locus">NFA_12350</name>
</gene>
<protein>
    <recommendedName>
        <fullName evidence="1">Formimidoylglutamase</fullName>
        <ecNumber evidence="1">3.5.3.8</ecNumber>
    </recommendedName>
    <alternativeName>
        <fullName evidence="1">Formiminoglutamase</fullName>
    </alternativeName>
    <alternativeName>
        <fullName evidence="1">Formiminoglutamate hydrolase</fullName>
    </alternativeName>
</protein>
<organism>
    <name type="scientific">Nocardia farcinica (strain IFM 10152)</name>
    <dbReference type="NCBI Taxonomy" id="247156"/>
    <lineage>
        <taxon>Bacteria</taxon>
        <taxon>Bacillati</taxon>
        <taxon>Actinomycetota</taxon>
        <taxon>Actinomycetes</taxon>
        <taxon>Mycobacteriales</taxon>
        <taxon>Nocardiaceae</taxon>
        <taxon>Nocardia</taxon>
    </lineage>
</organism>
<comment type="function">
    <text evidence="1">Catalyzes the conversion of N-formimidoyl-L-glutamate to L-glutamate and formamide.</text>
</comment>
<comment type="catalytic activity">
    <reaction evidence="1">
        <text>N-formimidoyl-L-glutamate + H2O = formamide + L-glutamate</text>
        <dbReference type="Rhea" id="RHEA:22492"/>
        <dbReference type="ChEBI" id="CHEBI:15377"/>
        <dbReference type="ChEBI" id="CHEBI:16397"/>
        <dbReference type="ChEBI" id="CHEBI:29985"/>
        <dbReference type="ChEBI" id="CHEBI:58928"/>
        <dbReference type="EC" id="3.5.3.8"/>
    </reaction>
</comment>
<comment type="cofactor">
    <cofactor evidence="1">
        <name>Mn(2+)</name>
        <dbReference type="ChEBI" id="CHEBI:29035"/>
    </cofactor>
    <text evidence="1">Binds 2 manganese ions per subunit.</text>
</comment>
<comment type="pathway">
    <text evidence="1">Amino-acid degradation; L-histidine degradation into L-glutamate; L-glutamate from N-formimidoyl-L-glutamate (hydrolase route): step 1/1.</text>
</comment>
<comment type="similarity">
    <text evidence="1">Belongs to the arginase family.</text>
</comment>
<keyword id="KW-0369">Histidine metabolism</keyword>
<keyword id="KW-0378">Hydrolase</keyword>
<keyword id="KW-0464">Manganese</keyword>
<keyword id="KW-0479">Metal-binding</keyword>
<keyword id="KW-1185">Reference proteome</keyword>